<reference key="1">
    <citation type="journal article" date="2006" name="Proc. Natl. Acad. Sci. U.S.A.">
        <title>Comparative genomics of the lactic acid bacteria.</title>
        <authorList>
            <person name="Makarova K.S."/>
            <person name="Slesarev A."/>
            <person name="Wolf Y.I."/>
            <person name="Sorokin A."/>
            <person name="Mirkin B."/>
            <person name="Koonin E.V."/>
            <person name="Pavlov A."/>
            <person name="Pavlova N."/>
            <person name="Karamychev V."/>
            <person name="Polouchine N."/>
            <person name="Shakhova V."/>
            <person name="Grigoriev I."/>
            <person name="Lou Y."/>
            <person name="Rohksar D."/>
            <person name="Lucas S."/>
            <person name="Huang K."/>
            <person name="Goodstein D.M."/>
            <person name="Hawkins T."/>
            <person name="Plengvidhya V."/>
            <person name="Welker D."/>
            <person name="Hughes J."/>
            <person name="Goh Y."/>
            <person name="Benson A."/>
            <person name="Baldwin K."/>
            <person name="Lee J.-H."/>
            <person name="Diaz-Muniz I."/>
            <person name="Dosti B."/>
            <person name="Smeianov V."/>
            <person name="Wechter W."/>
            <person name="Barabote R."/>
            <person name="Lorca G."/>
            <person name="Altermann E."/>
            <person name="Barrangou R."/>
            <person name="Ganesan B."/>
            <person name="Xie Y."/>
            <person name="Rawsthorne H."/>
            <person name="Tamir D."/>
            <person name="Parker C."/>
            <person name="Breidt F."/>
            <person name="Broadbent J.R."/>
            <person name="Hutkins R."/>
            <person name="O'Sullivan D."/>
            <person name="Steele J."/>
            <person name="Unlu G."/>
            <person name="Saier M.H. Jr."/>
            <person name="Klaenhammer T."/>
            <person name="Richardson P."/>
            <person name="Kozyavkin S."/>
            <person name="Weimer B.C."/>
            <person name="Mills D.A."/>
        </authorList>
    </citation>
    <scope>NUCLEOTIDE SEQUENCE [LARGE SCALE GENOMIC DNA]</scope>
    <source>
        <strain>SK11</strain>
    </source>
</reference>
<organism>
    <name type="scientific">Lactococcus lactis subsp. cremoris (strain SK11)</name>
    <dbReference type="NCBI Taxonomy" id="272622"/>
    <lineage>
        <taxon>Bacteria</taxon>
        <taxon>Bacillati</taxon>
        <taxon>Bacillota</taxon>
        <taxon>Bacilli</taxon>
        <taxon>Lactobacillales</taxon>
        <taxon>Streptococcaceae</taxon>
        <taxon>Lactococcus</taxon>
        <taxon>Lactococcus cremoris subsp. cremoris</taxon>
    </lineage>
</organism>
<protein>
    <recommendedName>
        <fullName evidence="1">Tyrosine recombinase XerS</fullName>
    </recommendedName>
</protein>
<proteinExistence type="inferred from homology"/>
<name>XERS_LACLS</name>
<dbReference type="EMBL" id="CP000425">
    <property type="protein sequence ID" value="ABJ72828.1"/>
    <property type="molecule type" value="Genomic_DNA"/>
</dbReference>
<dbReference type="RefSeq" id="WP_011676297.1">
    <property type="nucleotide sequence ID" value="NC_008527.1"/>
</dbReference>
<dbReference type="SMR" id="Q02YZ4"/>
<dbReference type="KEGG" id="llc:LACR_1302"/>
<dbReference type="HOGENOM" id="CLU_027562_9_6_9"/>
<dbReference type="Proteomes" id="UP000000240">
    <property type="component" value="Chromosome"/>
</dbReference>
<dbReference type="GO" id="GO:0005737">
    <property type="term" value="C:cytoplasm"/>
    <property type="evidence" value="ECO:0007669"/>
    <property type="project" value="UniProtKB-SubCell"/>
</dbReference>
<dbReference type="GO" id="GO:0003677">
    <property type="term" value="F:DNA binding"/>
    <property type="evidence" value="ECO:0007669"/>
    <property type="project" value="UniProtKB-KW"/>
</dbReference>
<dbReference type="GO" id="GO:0009037">
    <property type="term" value="F:tyrosine-based site-specific recombinase activity"/>
    <property type="evidence" value="ECO:0007669"/>
    <property type="project" value="UniProtKB-UniRule"/>
</dbReference>
<dbReference type="GO" id="GO:0051301">
    <property type="term" value="P:cell division"/>
    <property type="evidence" value="ECO:0007669"/>
    <property type="project" value="UniProtKB-KW"/>
</dbReference>
<dbReference type="GO" id="GO:0007059">
    <property type="term" value="P:chromosome segregation"/>
    <property type="evidence" value="ECO:0007669"/>
    <property type="project" value="UniProtKB-UniRule"/>
</dbReference>
<dbReference type="GO" id="GO:0006310">
    <property type="term" value="P:DNA recombination"/>
    <property type="evidence" value="ECO:0007669"/>
    <property type="project" value="UniProtKB-UniRule"/>
</dbReference>
<dbReference type="Gene3D" id="1.10.150.130">
    <property type="match status" value="1"/>
</dbReference>
<dbReference type="Gene3D" id="1.10.443.10">
    <property type="entry name" value="Intergrase catalytic core"/>
    <property type="match status" value="1"/>
</dbReference>
<dbReference type="HAMAP" id="MF_01816">
    <property type="entry name" value="Recomb_XerS"/>
    <property type="match status" value="1"/>
</dbReference>
<dbReference type="InterPro" id="IPR044068">
    <property type="entry name" value="CB"/>
</dbReference>
<dbReference type="InterPro" id="IPR011010">
    <property type="entry name" value="DNA_brk_join_enz"/>
</dbReference>
<dbReference type="InterPro" id="IPR013762">
    <property type="entry name" value="Integrase-like_cat_sf"/>
</dbReference>
<dbReference type="InterPro" id="IPR002104">
    <property type="entry name" value="Integrase_catalytic"/>
</dbReference>
<dbReference type="InterPro" id="IPR010998">
    <property type="entry name" value="Integrase_recombinase_N"/>
</dbReference>
<dbReference type="InterPro" id="IPR004107">
    <property type="entry name" value="Integrase_SAM-like_N"/>
</dbReference>
<dbReference type="InterPro" id="IPR023670">
    <property type="entry name" value="Recomb_XerS"/>
</dbReference>
<dbReference type="InterPro" id="IPR050090">
    <property type="entry name" value="Tyrosine_recombinase_XerCD"/>
</dbReference>
<dbReference type="NCBIfam" id="NF003462">
    <property type="entry name" value="PRK05084.1"/>
    <property type="match status" value="1"/>
</dbReference>
<dbReference type="PANTHER" id="PTHR30349">
    <property type="entry name" value="PHAGE INTEGRASE-RELATED"/>
    <property type="match status" value="1"/>
</dbReference>
<dbReference type="PANTHER" id="PTHR30349:SF77">
    <property type="entry name" value="TYROSINE RECOMBINASE XERC"/>
    <property type="match status" value="1"/>
</dbReference>
<dbReference type="Pfam" id="PF02899">
    <property type="entry name" value="Phage_int_SAM_1"/>
    <property type="match status" value="1"/>
</dbReference>
<dbReference type="Pfam" id="PF00589">
    <property type="entry name" value="Phage_integrase"/>
    <property type="match status" value="1"/>
</dbReference>
<dbReference type="SUPFAM" id="SSF56349">
    <property type="entry name" value="DNA breaking-rejoining enzymes"/>
    <property type="match status" value="1"/>
</dbReference>
<dbReference type="PROSITE" id="PS51900">
    <property type="entry name" value="CB"/>
    <property type="match status" value="1"/>
</dbReference>
<dbReference type="PROSITE" id="PS51898">
    <property type="entry name" value="TYR_RECOMBINASE"/>
    <property type="match status" value="1"/>
</dbReference>
<feature type="chain" id="PRO_0000372668" description="Tyrosine recombinase XerS">
    <location>
        <begin position="1"/>
        <end position="356"/>
    </location>
</feature>
<feature type="domain" description="Core-binding (CB)" evidence="3">
    <location>
        <begin position="16"/>
        <end position="121"/>
    </location>
</feature>
<feature type="domain" description="Tyr recombinase" evidence="2">
    <location>
        <begin position="169"/>
        <end position="354"/>
    </location>
</feature>
<feature type="active site" evidence="1">
    <location>
        <position position="210"/>
    </location>
</feature>
<feature type="active site" evidence="1">
    <location>
        <position position="234"/>
    </location>
</feature>
<feature type="active site" evidence="1">
    <location>
        <position position="306"/>
    </location>
</feature>
<feature type="active site" evidence="1">
    <location>
        <position position="309"/>
    </location>
</feature>
<feature type="active site" evidence="1">
    <location>
        <position position="332"/>
    </location>
</feature>
<feature type="active site" description="O-(3'-phospho-DNA)-tyrosine intermediate" evidence="1">
    <location>
        <position position="341"/>
    </location>
</feature>
<keyword id="KW-0131">Cell cycle</keyword>
<keyword id="KW-0132">Cell division</keyword>
<keyword id="KW-0159">Chromosome partition</keyword>
<keyword id="KW-0963">Cytoplasm</keyword>
<keyword id="KW-0229">DNA integration</keyword>
<keyword id="KW-0233">DNA recombination</keyword>
<keyword id="KW-0238">DNA-binding</keyword>
<comment type="function">
    <text evidence="1">Site-specific tyrosine recombinase, which acts by catalyzing the cutting and rejoining of the recombining DNA molecules. Essential to convert dimers of the bacterial chromosome into monomers to permit their segregation at cell division.</text>
</comment>
<comment type="activity regulation">
    <text evidence="1">FtsK is required for recombination.</text>
</comment>
<comment type="subcellular location">
    <subcellularLocation>
        <location evidence="1">Cytoplasm</location>
    </subcellularLocation>
</comment>
<comment type="similarity">
    <text evidence="1">Belongs to the 'phage' integrase family. XerS subfamily.</text>
</comment>
<sequence length="356" mass="41274">MKREQLIQNIEKLKHVMPPYVLEYYQSKLTVPYSLNTLYEYLKEYERFFSWLVDSGVADVDKITDVSLSVLENLTKRDLESFILYLRERPRLNTHSTRYGVSQTTINRTLSALSSLYKYLTEEVENEDGEPYFYRNVMKKVQTKKKSETLASRAENIKGKLFLGDETQGFLDYIDSEYEKTLSNRAHSSFFKNKERDLAIIALILASGIRLSEAVNVDLRDLNLNTMIVEVTRKGGKRDAVPFAPFAKTYFERYLEVRSQRYKTTAKDTAFFVTLYRDIASRIDPSSVEKLVAKYSQAFKVRVTPHKLRHTLATRLYAQTNSQVLVSNQLGHASTQVTDLYTHIINEEQKNALDSL</sequence>
<gene>
    <name evidence="1" type="primary">xerS</name>
    <name type="ordered locus">LACR_1302</name>
</gene>
<evidence type="ECO:0000255" key="1">
    <source>
        <dbReference type="HAMAP-Rule" id="MF_01816"/>
    </source>
</evidence>
<evidence type="ECO:0000255" key="2">
    <source>
        <dbReference type="PROSITE-ProRule" id="PRU01246"/>
    </source>
</evidence>
<evidence type="ECO:0000255" key="3">
    <source>
        <dbReference type="PROSITE-ProRule" id="PRU01248"/>
    </source>
</evidence>
<accession>Q02YZ4</accession>